<reference key="1">
    <citation type="journal article" date="1998" name="Nature">
        <title>Deciphering the biology of Mycobacterium tuberculosis from the complete genome sequence.</title>
        <authorList>
            <person name="Cole S.T."/>
            <person name="Brosch R."/>
            <person name="Parkhill J."/>
            <person name="Garnier T."/>
            <person name="Churcher C.M."/>
            <person name="Harris D.E."/>
            <person name="Gordon S.V."/>
            <person name="Eiglmeier K."/>
            <person name="Gas S."/>
            <person name="Barry C.E. III"/>
            <person name="Tekaia F."/>
            <person name="Badcock K."/>
            <person name="Basham D."/>
            <person name="Brown D."/>
            <person name="Chillingworth T."/>
            <person name="Connor R."/>
            <person name="Davies R.M."/>
            <person name="Devlin K."/>
            <person name="Feltwell T."/>
            <person name="Gentles S."/>
            <person name="Hamlin N."/>
            <person name="Holroyd S."/>
            <person name="Hornsby T."/>
            <person name="Jagels K."/>
            <person name="Krogh A."/>
            <person name="McLean J."/>
            <person name="Moule S."/>
            <person name="Murphy L.D."/>
            <person name="Oliver S."/>
            <person name="Osborne J."/>
            <person name="Quail M.A."/>
            <person name="Rajandream M.A."/>
            <person name="Rogers J."/>
            <person name="Rutter S."/>
            <person name="Seeger K."/>
            <person name="Skelton S."/>
            <person name="Squares S."/>
            <person name="Squares R."/>
            <person name="Sulston J.E."/>
            <person name="Taylor K."/>
            <person name="Whitehead S."/>
            <person name="Barrell B.G."/>
        </authorList>
    </citation>
    <scope>NUCLEOTIDE SEQUENCE [LARGE SCALE GENOMIC DNA]</scope>
    <source>
        <strain>ATCC 25618 / H37Rv</strain>
    </source>
</reference>
<reference key="2">
    <citation type="journal article" date="2011" name="Mol. Cell. Proteomics">
        <title>Proteogenomic analysis of Mycobacterium tuberculosis by high resolution mass spectrometry.</title>
        <authorList>
            <person name="Kelkar D.S."/>
            <person name="Kumar D."/>
            <person name="Kumar P."/>
            <person name="Balakrishnan L."/>
            <person name="Muthusamy B."/>
            <person name="Yadav A.K."/>
            <person name="Shrivastava P."/>
            <person name="Marimuthu A."/>
            <person name="Anand S."/>
            <person name="Sundaram H."/>
            <person name="Kingsbury R."/>
            <person name="Harsha H.C."/>
            <person name="Nair B."/>
            <person name="Prasad T.S."/>
            <person name="Chauhan D.S."/>
            <person name="Katoch K."/>
            <person name="Katoch V.M."/>
            <person name="Kumar P."/>
            <person name="Chaerkady R."/>
            <person name="Ramachandran S."/>
            <person name="Dash D."/>
            <person name="Pandey A."/>
        </authorList>
    </citation>
    <scope>IDENTIFICATION BY MASS SPECTROMETRY [LARGE SCALE ANALYSIS]</scope>
    <source>
        <strain>ATCC 25618 / H37Rv</strain>
    </source>
</reference>
<dbReference type="EMBL" id="AL123456">
    <property type="protein sequence ID" value="CCP44589.1"/>
    <property type="molecule type" value="Genomic_DNA"/>
</dbReference>
<dbReference type="PIR" id="H70720">
    <property type="entry name" value="H70720"/>
</dbReference>
<dbReference type="RefSeq" id="NP_216339.1">
    <property type="nucleotide sequence ID" value="NC_000962.3"/>
</dbReference>
<dbReference type="RefSeq" id="WP_003901262.1">
    <property type="nucleotide sequence ID" value="NZ_NVQJ01000013.1"/>
</dbReference>
<dbReference type="SMR" id="P9WFG1"/>
<dbReference type="FunCoup" id="P9WFG1">
    <property type="interactions" value="1"/>
</dbReference>
<dbReference type="STRING" id="83332.Rv1823"/>
<dbReference type="PaxDb" id="83332-Rv1823"/>
<dbReference type="DNASU" id="885547"/>
<dbReference type="GeneID" id="885547"/>
<dbReference type="KEGG" id="mtu:Rv1823"/>
<dbReference type="KEGG" id="mtv:RVBD_1823"/>
<dbReference type="TubercuList" id="Rv1823"/>
<dbReference type="eggNOG" id="COG3879">
    <property type="taxonomic scope" value="Bacteria"/>
</dbReference>
<dbReference type="InParanoid" id="P9WFG1"/>
<dbReference type="OrthoDB" id="3218134at2"/>
<dbReference type="Proteomes" id="UP000001584">
    <property type="component" value="Chromosome"/>
</dbReference>
<dbReference type="GO" id="GO:0005886">
    <property type="term" value="C:plasma membrane"/>
    <property type="evidence" value="ECO:0007005"/>
    <property type="project" value="MTBBASE"/>
</dbReference>
<dbReference type="FunFam" id="3.30.70.1880:FF:000001">
    <property type="entry name" value="Membrane associated protein"/>
    <property type="match status" value="1"/>
</dbReference>
<dbReference type="Gene3D" id="3.30.70.1880">
    <property type="entry name" value="Protein of unknown function DUF881"/>
    <property type="match status" value="1"/>
</dbReference>
<dbReference type="InterPro" id="IPR010273">
    <property type="entry name" value="DUF881"/>
</dbReference>
<dbReference type="PANTHER" id="PTHR37313:SF1">
    <property type="entry name" value="UPF0749 PROTEIN RV1823"/>
    <property type="match status" value="1"/>
</dbReference>
<dbReference type="PANTHER" id="PTHR37313">
    <property type="entry name" value="UPF0749 PROTEIN RV1825"/>
    <property type="match status" value="1"/>
</dbReference>
<dbReference type="Pfam" id="PF05949">
    <property type="entry name" value="DUF881"/>
    <property type="match status" value="1"/>
</dbReference>
<evidence type="ECO:0000255" key="1"/>
<evidence type="ECO:0000305" key="2"/>
<sequence>MAESDRLLGGYDPNAGYSAHAGAQPQRIPVPSLLRALLSEHLDAGYAAVAAERERAAAPRCWQARAVSWMWQALAATLVAAVFAAAVAQARSVAPGVRAAQQLLVASVRSTQAAATTLAQRRSTLSAKVDDVRRIVLADDAEGQRLLARLDVLSLAAASAPVVGPGLTVTVTDPGASPNLSDVSKQRVSGSQQIILDRDLQLVVNSLWESGAEAISIDGVRIGPNVTIRQAGGAILVDNNPTSSPYTILAVGPPHAMQDVFDRSAGLYRLRLLETSYGVGVSVNVGDGLALPAGATRDVKFAKQIGP</sequence>
<organism>
    <name type="scientific">Mycobacterium tuberculosis (strain ATCC 25618 / H37Rv)</name>
    <dbReference type="NCBI Taxonomy" id="83332"/>
    <lineage>
        <taxon>Bacteria</taxon>
        <taxon>Bacillati</taxon>
        <taxon>Actinomycetota</taxon>
        <taxon>Actinomycetes</taxon>
        <taxon>Mycobacteriales</taxon>
        <taxon>Mycobacteriaceae</taxon>
        <taxon>Mycobacterium</taxon>
        <taxon>Mycobacterium tuberculosis complex</taxon>
    </lineage>
</organism>
<proteinExistence type="evidence at protein level"/>
<protein>
    <recommendedName>
        <fullName>UPF0749 protein Rv1823</fullName>
    </recommendedName>
</protein>
<comment type="subcellular location">
    <subcellularLocation>
        <location evidence="2">Cell membrane</location>
        <topology evidence="2">Multi-pass membrane protein</topology>
    </subcellularLocation>
</comment>
<comment type="similarity">
    <text evidence="2">Belongs to the UPF0749 family.</text>
</comment>
<keyword id="KW-1003">Cell membrane</keyword>
<keyword id="KW-0472">Membrane</keyword>
<keyword id="KW-1185">Reference proteome</keyword>
<keyword id="KW-0732">Signal</keyword>
<keyword id="KW-0812">Transmembrane</keyword>
<keyword id="KW-1133">Transmembrane helix</keyword>
<accession>P9WFG1</accession>
<accession>L0TAQ3</accession>
<accession>P64891</accession>
<accession>Q50610</accession>
<gene>
    <name type="ordered locus">Rv1823</name>
    <name type="ORF">MTCY1A11.20c</name>
</gene>
<feature type="signal peptide" evidence="1">
    <location>
        <begin position="1"/>
        <end position="23"/>
    </location>
</feature>
<feature type="chain" id="PRO_0000014110" description="UPF0749 protein Rv1823">
    <location>
        <begin position="24"/>
        <end position="307"/>
    </location>
</feature>
<feature type="transmembrane region" description="Helical" evidence="1">
    <location>
        <begin position="67"/>
        <end position="87"/>
    </location>
</feature>
<feature type="transmembrane region" description="Helical" evidence="1">
    <location>
        <begin position="152"/>
        <end position="172"/>
    </location>
</feature>
<name>Y1823_MYCTU</name>